<reference key="1">
    <citation type="journal article" date="2009" name="J. Bacteriol.">
        <title>Complete and draft genome sequences of six members of the Aquificales.</title>
        <authorList>
            <person name="Reysenbach A.-L."/>
            <person name="Hamamura N."/>
            <person name="Podar M."/>
            <person name="Griffiths E."/>
            <person name="Ferreira S."/>
            <person name="Hochstein R."/>
            <person name="Heidelberg J."/>
            <person name="Johnson J."/>
            <person name="Mead D."/>
            <person name="Pohorille A."/>
            <person name="Sarmiento M."/>
            <person name="Schweighofer K."/>
            <person name="Seshadri R."/>
            <person name="Voytek M.A."/>
        </authorList>
    </citation>
    <scope>NUCLEOTIDE SEQUENCE [LARGE SCALE GENOMIC DNA]</scope>
    <source>
        <strain>Y04AAS1</strain>
    </source>
</reference>
<comment type="function">
    <text evidence="1">Catalyzes the reversible interconversion of serine and glycine with tetrahydrofolate (THF) serving as the one-carbon carrier. This reaction serves as the major source of one-carbon groups required for the biosynthesis of purines, thymidylate, methionine, and other important biomolecules. Also exhibits THF-independent aldolase activity toward beta-hydroxyamino acids, producing glycine and aldehydes, via a retro-aldol mechanism.</text>
</comment>
<comment type="catalytic activity">
    <reaction evidence="1">
        <text>(6R)-5,10-methylene-5,6,7,8-tetrahydrofolate + glycine + H2O = (6S)-5,6,7,8-tetrahydrofolate + L-serine</text>
        <dbReference type="Rhea" id="RHEA:15481"/>
        <dbReference type="ChEBI" id="CHEBI:15377"/>
        <dbReference type="ChEBI" id="CHEBI:15636"/>
        <dbReference type="ChEBI" id="CHEBI:33384"/>
        <dbReference type="ChEBI" id="CHEBI:57305"/>
        <dbReference type="ChEBI" id="CHEBI:57453"/>
        <dbReference type="EC" id="2.1.2.1"/>
    </reaction>
</comment>
<comment type="cofactor">
    <cofactor evidence="1">
        <name>pyridoxal 5'-phosphate</name>
        <dbReference type="ChEBI" id="CHEBI:597326"/>
    </cofactor>
</comment>
<comment type="pathway">
    <text evidence="1">One-carbon metabolism; tetrahydrofolate interconversion.</text>
</comment>
<comment type="pathway">
    <text evidence="1">Amino-acid biosynthesis; glycine biosynthesis; glycine from L-serine: step 1/1.</text>
</comment>
<comment type="subunit">
    <text evidence="1">Homodimer.</text>
</comment>
<comment type="subcellular location">
    <subcellularLocation>
        <location evidence="1">Cytoplasm</location>
    </subcellularLocation>
</comment>
<comment type="similarity">
    <text evidence="1">Belongs to the SHMT family.</text>
</comment>
<proteinExistence type="inferred from homology"/>
<gene>
    <name evidence="1" type="primary">glyA</name>
    <name type="ordered locus">HY04AAS1_0499</name>
</gene>
<accession>B4U7S5</accession>
<organism>
    <name type="scientific">Hydrogenobaculum sp. (strain Y04AAS1)</name>
    <dbReference type="NCBI Taxonomy" id="380749"/>
    <lineage>
        <taxon>Bacteria</taxon>
        <taxon>Pseudomonadati</taxon>
        <taxon>Aquificota</taxon>
        <taxon>Aquificia</taxon>
        <taxon>Aquificales</taxon>
        <taxon>Aquificaceae</taxon>
        <taxon>Hydrogenobaculum</taxon>
    </lineage>
</organism>
<keyword id="KW-0028">Amino-acid biosynthesis</keyword>
<keyword id="KW-0963">Cytoplasm</keyword>
<keyword id="KW-0554">One-carbon metabolism</keyword>
<keyword id="KW-0663">Pyridoxal phosphate</keyword>
<keyword id="KW-0808">Transferase</keyword>
<protein>
    <recommendedName>
        <fullName evidence="1">Serine hydroxymethyltransferase</fullName>
        <shortName evidence="1">SHMT</shortName>
        <shortName evidence="1">Serine methylase</shortName>
        <ecNumber evidence="1">2.1.2.1</ecNumber>
    </recommendedName>
</protein>
<name>GLYA_HYDS0</name>
<dbReference type="EC" id="2.1.2.1" evidence="1"/>
<dbReference type="EMBL" id="CP001130">
    <property type="protein sequence ID" value="ACG57186.1"/>
    <property type="molecule type" value="Genomic_DNA"/>
</dbReference>
<dbReference type="RefSeq" id="WP_012513542.1">
    <property type="nucleotide sequence ID" value="NC_011126.1"/>
</dbReference>
<dbReference type="SMR" id="B4U7S5"/>
<dbReference type="STRING" id="380749.HY04AAS1_0499"/>
<dbReference type="KEGG" id="hya:HY04AAS1_0499"/>
<dbReference type="eggNOG" id="COG0112">
    <property type="taxonomic scope" value="Bacteria"/>
</dbReference>
<dbReference type="HOGENOM" id="CLU_022477_2_1_0"/>
<dbReference type="OrthoDB" id="9803846at2"/>
<dbReference type="UniPathway" id="UPA00193"/>
<dbReference type="UniPathway" id="UPA00288">
    <property type="reaction ID" value="UER01023"/>
</dbReference>
<dbReference type="GO" id="GO:0005829">
    <property type="term" value="C:cytosol"/>
    <property type="evidence" value="ECO:0007669"/>
    <property type="project" value="TreeGrafter"/>
</dbReference>
<dbReference type="GO" id="GO:0004372">
    <property type="term" value="F:glycine hydroxymethyltransferase activity"/>
    <property type="evidence" value="ECO:0007669"/>
    <property type="project" value="UniProtKB-UniRule"/>
</dbReference>
<dbReference type="GO" id="GO:0030170">
    <property type="term" value="F:pyridoxal phosphate binding"/>
    <property type="evidence" value="ECO:0007669"/>
    <property type="project" value="UniProtKB-UniRule"/>
</dbReference>
<dbReference type="GO" id="GO:0019264">
    <property type="term" value="P:glycine biosynthetic process from serine"/>
    <property type="evidence" value="ECO:0007669"/>
    <property type="project" value="UniProtKB-UniRule"/>
</dbReference>
<dbReference type="GO" id="GO:0035999">
    <property type="term" value="P:tetrahydrofolate interconversion"/>
    <property type="evidence" value="ECO:0007669"/>
    <property type="project" value="UniProtKB-UniRule"/>
</dbReference>
<dbReference type="CDD" id="cd00378">
    <property type="entry name" value="SHMT"/>
    <property type="match status" value="1"/>
</dbReference>
<dbReference type="FunFam" id="3.40.640.10:FF:000001">
    <property type="entry name" value="Serine hydroxymethyltransferase"/>
    <property type="match status" value="1"/>
</dbReference>
<dbReference type="FunFam" id="3.90.1150.10:FF:000003">
    <property type="entry name" value="Serine hydroxymethyltransferase"/>
    <property type="match status" value="1"/>
</dbReference>
<dbReference type="Gene3D" id="3.90.1150.10">
    <property type="entry name" value="Aspartate Aminotransferase, domain 1"/>
    <property type="match status" value="1"/>
</dbReference>
<dbReference type="Gene3D" id="3.40.640.10">
    <property type="entry name" value="Type I PLP-dependent aspartate aminotransferase-like (Major domain)"/>
    <property type="match status" value="1"/>
</dbReference>
<dbReference type="HAMAP" id="MF_00051">
    <property type="entry name" value="SHMT"/>
    <property type="match status" value="1"/>
</dbReference>
<dbReference type="InterPro" id="IPR015424">
    <property type="entry name" value="PyrdxlP-dep_Trfase"/>
</dbReference>
<dbReference type="InterPro" id="IPR015421">
    <property type="entry name" value="PyrdxlP-dep_Trfase_major"/>
</dbReference>
<dbReference type="InterPro" id="IPR015422">
    <property type="entry name" value="PyrdxlP-dep_Trfase_small"/>
</dbReference>
<dbReference type="InterPro" id="IPR001085">
    <property type="entry name" value="Ser_HO-MeTrfase"/>
</dbReference>
<dbReference type="InterPro" id="IPR049943">
    <property type="entry name" value="Ser_HO-MeTrfase-like"/>
</dbReference>
<dbReference type="InterPro" id="IPR019798">
    <property type="entry name" value="Ser_HO-MeTrfase_PLP_BS"/>
</dbReference>
<dbReference type="InterPro" id="IPR039429">
    <property type="entry name" value="SHMT-like_dom"/>
</dbReference>
<dbReference type="NCBIfam" id="NF000586">
    <property type="entry name" value="PRK00011.1"/>
    <property type="match status" value="1"/>
</dbReference>
<dbReference type="PANTHER" id="PTHR11680">
    <property type="entry name" value="SERINE HYDROXYMETHYLTRANSFERASE"/>
    <property type="match status" value="1"/>
</dbReference>
<dbReference type="PANTHER" id="PTHR11680:SF35">
    <property type="entry name" value="SERINE HYDROXYMETHYLTRANSFERASE 1"/>
    <property type="match status" value="1"/>
</dbReference>
<dbReference type="Pfam" id="PF00464">
    <property type="entry name" value="SHMT"/>
    <property type="match status" value="1"/>
</dbReference>
<dbReference type="PIRSF" id="PIRSF000412">
    <property type="entry name" value="SHMT"/>
    <property type="match status" value="1"/>
</dbReference>
<dbReference type="SUPFAM" id="SSF53383">
    <property type="entry name" value="PLP-dependent transferases"/>
    <property type="match status" value="1"/>
</dbReference>
<dbReference type="PROSITE" id="PS00096">
    <property type="entry name" value="SHMT"/>
    <property type="match status" value="1"/>
</dbReference>
<evidence type="ECO:0000255" key="1">
    <source>
        <dbReference type="HAMAP-Rule" id="MF_00051"/>
    </source>
</evidence>
<sequence length="417" mass="45978">MLLKAKDKEVYDAIASELNRQNSYLEMIASENFTSLEIMEAQGSVLTNKYAEGLPHKRYYGGCEYVDIVEDLAIQRAKELFKAEHANVQPHSGSQANMAVYMAVLKPGDTILGMSLAHGGHLTHGATVNFSGKIYNAVYYGVRESDYLIDYDQMYKLAKEHKPKMIIGGASAYPRVIDWAKMREIADSVGAYLMVDMAHYAGLIAGGVYPSPVEVSHFVTSTTHKTLRGPRSGFILSKQEFAKDIDKSVFPGTQGGPLMHVIAAKAVCFKEAMSDEFKQYAQQVVENARVLAEELLKEGINVLTGGTDSHMVLVDLRNIGITGKEAENRLGEAGITVNKNAVPFDPLPPTKTSGIRIGTPALTTRGMKEDQMKIIAKIIAKVLKNYSEDTLQKAREQVKDLCEAFPLYKELKDEICV</sequence>
<feature type="chain" id="PRO_1000091548" description="Serine hydroxymethyltransferase">
    <location>
        <begin position="1"/>
        <end position="417"/>
    </location>
</feature>
<feature type="binding site" evidence="1">
    <location>
        <position position="116"/>
    </location>
    <ligand>
        <name>(6S)-5,6,7,8-tetrahydrofolate</name>
        <dbReference type="ChEBI" id="CHEBI:57453"/>
    </ligand>
</feature>
<feature type="binding site" evidence="1">
    <location>
        <begin position="120"/>
        <end position="122"/>
    </location>
    <ligand>
        <name>(6S)-5,6,7,8-tetrahydrofolate</name>
        <dbReference type="ChEBI" id="CHEBI:57453"/>
    </ligand>
</feature>
<feature type="site" description="Plays an important role in substrate specificity" evidence="1">
    <location>
        <position position="224"/>
    </location>
</feature>
<feature type="modified residue" description="N6-(pyridoxal phosphate)lysine" evidence="1">
    <location>
        <position position="225"/>
    </location>
</feature>